<evidence type="ECO:0000255" key="1">
    <source>
        <dbReference type="HAMAP-Rule" id="MF_01301"/>
    </source>
</evidence>
<name>LAMB_ESCF3</name>
<protein>
    <recommendedName>
        <fullName evidence="1">Maltoporin</fullName>
    </recommendedName>
    <alternativeName>
        <fullName evidence="1">Maltose-inducible porin</fullName>
    </alternativeName>
</protein>
<comment type="function">
    <text evidence="1">Involved in the transport of maltose and maltodextrins.</text>
</comment>
<comment type="catalytic activity">
    <reaction evidence="1">
        <text>beta-maltose(in) = beta-maltose(out)</text>
        <dbReference type="Rhea" id="RHEA:29731"/>
        <dbReference type="ChEBI" id="CHEBI:18147"/>
    </reaction>
</comment>
<comment type="subunit">
    <text evidence="1">Homotrimer formed of three 18-stranded antiparallel beta-barrels, containing three independent channels.</text>
</comment>
<comment type="subcellular location">
    <subcellularLocation>
        <location evidence="1">Cell outer membrane</location>
        <topology evidence="1">Multi-pass membrane protein</topology>
    </subcellularLocation>
</comment>
<comment type="induction">
    <text evidence="1">By maltose.</text>
</comment>
<comment type="similarity">
    <text evidence="1">Belongs to the porin LamB (TC 1.B.3) family.</text>
</comment>
<keyword id="KW-0998">Cell outer membrane</keyword>
<keyword id="KW-0406">Ion transport</keyword>
<keyword id="KW-0472">Membrane</keyword>
<keyword id="KW-0626">Porin</keyword>
<keyword id="KW-0732">Signal</keyword>
<keyword id="KW-0762">Sugar transport</keyword>
<keyword id="KW-0812">Transmembrane</keyword>
<keyword id="KW-1134">Transmembrane beta strand</keyword>
<keyword id="KW-0813">Transport</keyword>
<gene>
    <name evidence="1" type="primary">lamB</name>
    <name type="ordered locus">EFER_4128</name>
</gene>
<accession>B7LL09</accession>
<dbReference type="EMBL" id="CU928158">
    <property type="protein sequence ID" value="CAQ91550.1"/>
    <property type="molecule type" value="Genomic_DNA"/>
</dbReference>
<dbReference type="RefSeq" id="WP_000989133.1">
    <property type="nucleotide sequence ID" value="NC_011740.1"/>
</dbReference>
<dbReference type="SMR" id="B7LL09"/>
<dbReference type="GeneID" id="75059286"/>
<dbReference type="KEGG" id="efe:EFER_4128"/>
<dbReference type="HOGENOM" id="CLU_032473_4_1_6"/>
<dbReference type="OrthoDB" id="106611at2"/>
<dbReference type="Proteomes" id="UP000000745">
    <property type="component" value="Chromosome"/>
</dbReference>
<dbReference type="GO" id="GO:0009279">
    <property type="term" value="C:cell outer membrane"/>
    <property type="evidence" value="ECO:0007669"/>
    <property type="project" value="UniProtKB-SubCell"/>
</dbReference>
<dbReference type="GO" id="GO:0046930">
    <property type="term" value="C:pore complex"/>
    <property type="evidence" value="ECO:0007669"/>
    <property type="project" value="UniProtKB-KW"/>
</dbReference>
<dbReference type="GO" id="GO:0042958">
    <property type="term" value="F:maltodextrin transmembrane transporter activity"/>
    <property type="evidence" value="ECO:0007669"/>
    <property type="project" value="InterPro"/>
</dbReference>
<dbReference type="GO" id="GO:0015481">
    <property type="term" value="F:maltose transporting porin activity"/>
    <property type="evidence" value="ECO:0007669"/>
    <property type="project" value="InterPro"/>
</dbReference>
<dbReference type="GO" id="GO:0006811">
    <property type="term" value="P:monoatomic ion transport"/>
    <property type="evidence" value="ECO:0007669"/>
    <property type="project" value="UniProtKB-KW"/>
</dbReference>
<dbReference type="CDD" id="cd01346">
    <property type="entry name" value="Maltoporin-like"/>
    <property type="match status" value="1"/>
</dbReference>
<dbReference type="FunFam" id="2.40.170.10:FF:000001">
    <property type="entry name" value="Maltoporin"/>
    <property type="match status" value="1"/>
</dbReference>
<dbReference type="Gene3D" id="2.40.170.10">
    <property type="entry name" value="Porin, LamB type"/>
    <property type="match status" value="1"/>
</dbReference>
<dbReference type="HAMAP" id="MF_01301">
    <property type="entry name" value="LamB"/>
    <property type="match status" value="1"/>
</dbReference>
<dbReference type="InterPro" id="IPR050286">
    <property type="entry name" value="G_neg_Bact_CarbUptk_Porin"/>
</dbReference>
<dbReference type="InterPro" id="IPR023738">
    <property type="entry name" value="Maltoporin"/>
</dbReference>
<dbReference type="InterPro" id="IPR003192">
    <property type="entry name" value="Porin_LamB"/>
</dbReference>
<dbReference type="InterPro" id="IPR036998">
    <property type="entry name" value="Porin_LamB_sf"/>
</dbReference>
<dbReference type="NCBIfam" id="NF006860">
    <property type="entry name" value="PRK09360.1"/>
    <property type="match status" value="1"/>
</dbReference>
<dbReference type="PANTHER" id="PTHR38762">
    <property type="entry name" value="CRYPTIC OUTER MEMBRANE PORIN BGLH-RELATED"/>
    <property type="match status" value="1"/>
</dbReference>
<dbReference type="PANTHER" id="PTHR38762:SF1">
    <property type="entry name" value="CRYPTIC OUTER MEMBRANE PORIN BGLH-RELATED"/>
    <property type="match status" value="1"/>
</dbReference>
<dbReference type="Pfam" id="PF02264">
    <property type="entry name" value="LamB"/>
    <property type="match status" value="1"/>
</dbReference>
<dbReference type="SUPFAM" id="SSF56935">
    <property type="entry name" value="Porins"/>
    <property type="match status" value="1"/>
</dbReference>
<sequence>MMTTLRKLPLAVAVAAGMMSVQAMAVDFHGYARSGIGWTGSGGEQQCFQTTGAQSKYRLGNECETYAELKLGQEVWKEGDKSFYFDTNVAYSVAQQNDWEATSPAFREANVQGKNLIDALPGATIWAGKRFYQRHDVHMIDFYYWDISGPGAGLENIDLGFGKLSLAATRSSEAGGSSSFASDNIYDYVNETANDVFDVRLAQMEINPGGTLELGVDYGRANLRDDYRLVDGASKDGWMFTAEHTQSMLKGFNKFVVQYATDAMTSQGKGLNQGSGVAFDNEHFAYNINNNGHLLRILDHGAISLGDNWDMMYVGMYQDINWDNDNGTKWWTVGIRPMYKWTPIMSTLLEVGYDNVESQRTGDKNNQYKITLAQQWQAGDSIWSRPAIRVFATYAKWDEKWGYDYNDNSKTNPNYGKAVPANFEGGSFGRGDSDEWTFGAQMEIWW</sequence>
<reference key="1">
    <citation type="journal article" date="2009" name="PLoS Genet.">
        <title>Organised genome dynamics in the Escherichia coli species results in highly diverse adaptive paths.</title>
        <authorList>
            <person name="Touchon M."/>
            <person name="Hoede C."/>
            <person name="Tenaillon O."/>
            <person name="Barbe V."/>
            <person name="Baeriswyl S."/>
            <person name="Bidet P."/>
            <person name="Bingen E."/>
            <person name="Bonacorsi S."/>
            <person name="Bouchier C."/>
            <person name="Bouvet O."/>
            <person name="Calteau A."/>
            <person name="Chiapello H."/>
            <person name="Clermont O."/>
            <person name="Cruveiller S."/>
            <person name="Danchin A."/>
            <person name="Diard M."/>
            <person name="Dossat C."/>
            <person name="Karoui M.E."/>
            <person name="Frapy E."/>
            <person name="Garry L."/>
            <person name="Ghigo J.M."/>
            <person name="Gilles A.M."/>
            <person name="Johnson J."/>
            <person name="Le Bouguenec C."/>
            <person name="Lescat M."/>
            <person name="Mangenot S."/>
            <person name="Martinez-Jehanne V."/>
            <person name="Matic I."/>
            <person name="Nassif X."/>
            <person name="Oztas S."/>
            <person name="Petit M.A."/>
            <person name="Pichon C."/>
            <person name="Rouy Z."/>
            <person name="Ruf C.S."/>
            <person name="Schneider D."/>
            <person name="Tourret J."/>
            <person name="Vacherie B."/>
            <person name="Vallenet D."/>
            <person name="Medigue C."/>
            <person name="Rocha E.P.C."/>
            <person name="Denamur E."/>
        </authorList>
    </citation>
    <scope>NUCLEOTIDE SEQUENCE [LARGE SCALE GENOMIC DNA]</scope>
    <source>
        <strain>ATCC 35469 / DSM 13698 / BCRC 15582 / CCUG 18766 / IAM 14443 / JCM 21226 / LMG 7866 / NBRC 102419 / NCTC 12128 / CDC 0568-73</strain>
    </source>
</reference>
<feature type="signal peptide" evidence="1">
    <location>
        <begin position="1"/>
        <end position="25"/>
    </location>
</feature>
<feature type="chain" id="PRO_1000140488" description="Maltoporin">
    <location>
        <begin position="26"/>
        <end position="446"/>
    </location>
</feature>
<feature type="site" description="Greasy slide, important in sugar transport" evidence="1">
    <location>
        <position position="31"/>
    </location>
</feature>
<feature type="site" description="Greasy slide, important in sugar transport" evidence="1">
    <location>
        <position position="66"/>
    </location>
</feature>
<feature type="site" description="Greasy slide, important in sugar transport" evidence="1">
    <location>
        <position position="99"/>
    </location>
</feature>
<feature type="site" description="Important in sugar transport" evidence="1">
    <location>
        <position position="143"/>
    </location>
</feature>
<feature type="site" description="Greasy slide, important in sugar transport" evidence="1">
    <location>
        <position position="252"/>
    </location>
</feature>
<feature type="site" description="Greasy slide, important in sugar transport" evidence="1">
    <location>
        <position position="383"/>
    </location>
</feature>
<feature type="site" description="Greasy slide, important in sugar transport" evidence="1">
    <location>
        <position position="445"/>
    </location>
</feature>
<organism>
    <name type="scientific">Escherichia fergusonii (strain ATCC 35469 / DSM 13698 / CCUG 18766 / IAM 14443 / JCM 21226 / LMG 7866 / NBRC 102419 / NCTC 12128 / CDC 0568-73)</name>
    <dbReference type="NCBI Taxonomy" id="585054"/>
    <lineage>
        <taxon>Bacteria</taxon>
        <taxon>Pseudomonadati</taxon>
        <taxon>Pseudomonadota</taxon>
        <taxon>Gammaproteobacteria</taxon>
        <taxon>Enterobacterales</taxon>
        <taxon>Enterobacteriaceae</taxon>
        <taxon>Escherichia</taxon>
    </lineage>
</organism>
<proteinExistence type="inferred from homology"/>